<protein>
    <recommendedName>
        <fullName evidence="1">Large ribosomal subunit protein bL33c</fullName>
    </recommendedName>
    <alternativeName>
        <fullName evidence="2">50S ribosomal protein L33, chloroplastic</fullName>
    </alternativeName>
</protein>
<geneLocation type="chloroplast"/>
<dbReference type="EMBL" id="DQ887677">
    <property type="protein sequence ID" value="ABI14493.1"/>
    <property type="molecule type" value="Genomic_DNA"/>
</dbReference>
<dbReference type="RefSeq" id="YP_784494.1">
    <property type="nucleotide sequence ID" value="NC_008457.1"/>
</dbReference>
<dbReference type="GeneID" id="4363758"/>
<dbReference type="GO" id="GO:0009507">
    <property type="term" value="C:chloroplast"/>
    <property type="evidence" value="ECO:0007669"/>
    <property type="project" value="UniProtKB-SubCell"/>
</dbReference>
<dbReference type="GO" id="GO:1990904">
    <property type="term" value="C:ribonucleoprotein complex"/>
    <property type="evidence" value="ECO:0007669"/>
    <property type="project" value="UniProtKB-KW"/>
</dbReference>
<dbReference type="GO" id="GO:0005840">
    <property type="term" value="C:ribosome"/>
    <property type="evidence" value="ECO:0007669"/>
    <property type="project" value="UniProtKB-KW"/>
</dbReference>
<dbReference type="GO" id="GO:0003735">
    <property type="term" value="F:structural constituent of ribosome"/>
    <property type="evidence" value="ECO:0007669"/>
    <property type="project" value="InterPro"/>
</dbReference>
<dbReference type="GO" id="GO:0006412">
    <property type="term" value="P:translation"/>
    <property type="evidence" value="ECO:0007669"/>
    <property type="project" value="UniProtKB-UniRule"/>
</dbReference>
<dbReference type="Gene3D" id="2.20.28.120">
    <property type="entry name" value="Ribosomal protein L33"/>
    <property type="match status" value="1"/>
</dbReference>
<dbReference type="HAMAP" id="MF_00294">
    <property type="entry name" value="Ribosomal_bL33"/>
    <property type="match status" value="1"/>
</dbReference>
<dbReference type="InterPro" id="IPR001705">
    <property type="entry name" value="Ribosomal_bL33"/>
</dbReference>
<dbReference type="InterPro" id="IPR018264">
    <property type="entry name" value="Ribosomal_bL33_CS"/>
</dbReference>
<dbReference type="InterPro" id="IPR038584">
    <property type="entry name" value="Ribosomal_bL33_sf"/>
</dbReference>
<dbReference type="InterPro" id="IPR011332">
    <property type="entry name" value="Ribosomal_zn-bd"/>
</dbReference>
<dbReference type="NCBIfam" id="NF001764">
    <property type="entry name" value="PRK00504.1"/>
    <property type="match status" value="1"/>
</dbReference>
<dbReference type="NCBIfam" id="NF001860">
    <property type="entry name" value="PRK00595.1"/>
    <property type="match status" value="1"/>
</dbReference>
<dbReference type="NCBIfam" id="TIGR01023">
    <property type="entry name" value="rpmG_bact"/>
    <property type="match status" value="1"/>
</dbReference>
<dbReference type="PANTHER" id="PTHR43168">
    <property type="entry name" value="50S RIBOSOMAL PROTEIN L33, CHLOROPLASTIC"/>
    <property type="match status" value="1"/>
</dbReference>
<dbReference type="PANTHER" id="PTHR43168:SF2">
    <property type="entry name" value="LARGE RIBOSOMAL SUBUNIT PROTEIN BL33C"/>
    <property type="match status" value="1"/>
</dbReference>
<dbReference type="Pfam" id="PF00471">
    <property type="entry name" value="Ribosomal_L33"/>
    <property type="match status" value="1"/>
</dbReference>
<dbReference type="SUPFAM" id="SSF57829">
    <property type="entry name" value="Zn-binding ribosomal proteins"/>
    <property type="match status" value="1"/>
</dbReference>
<dbReference type="PROSITE" id="PS00582">
    <property type="entry name" value="RIBOSOMAL_L33"/>
    <property type="match status" value="1"/>
</dbReference>
<proteinExistence type="inferred from homology"/>
<reference key="1">
    <citation type="journal article" date="2006" name="BMC Evol. Biol.">
        <title>Complete plastid genome sequences of Drimys, Liriodendron, and Piper: implications for the phylogenetic relationships of magnoliids.</title>
        <authorList>
            <person name="Cai Z."/>
            <person name="Penaflor C."/>
            <person name="Kuehl J.V."/>
            <person name="Leebens-Mack J."/>
            <person name="Carlson J.E."/>
            <person name="dePamphilis C.W."/>
            <person name="Boore J.L."/>
            <person name="Jansen R.K."/>
        </authorList>
    </citation>
    <scope>NUCLEOTIDE SEQUENCE [LARGE SCALE GENOMIC DNA]</scope>
</reference>
<organism>
    <name type="scientific">Piper cenocladum</name>
    <name type="common">Ant piper</name>
    <dbReference type="NCBI Taxonomy" id="398741"/>
    <lineage>
        <taxon>Eukaryota</taxon>
        <taxon>Viridiplantae</taxon>
        <taxon>Streptophyta</taxon>
        <taxon>Embryophyta</taxon>
        <taxon>Tracheophyta</taxon>
        <taxon>Spermatophyta</taxon>
        <taxon>Magnoliopsida</taxon>
        <taxon>Magnoliidae</taxon>
        <taxon>Piperales</taxon>
        <taxon>Piperaceae</taxon>
        <taxon>Piper</taxon>
    </lineage>
</organism>
<feature type="chain" id="PRO_0000276514" description="Large ribosomal subunit protein bL33c">
    <location>
        <begin position="1"/>
        <end position="68"/>
    </location>
</feature>
<evidence type="ECO:0000255" key="1">
    <source>
        <dbReference type="HAMAP-Rule" id="MF_00294"/>
    </source>
</evidence>
<evidence type="ECO:0000305" key="2"/>
<sequence length="68" mass="7879">MAKGKDARVIVLLECTSCVRNGFNKQKKPSGVSRYITQRNRHNTPGRLELRKFCPYCHKHTIHGEIKK</sequence>
<comment type="subcellular location">
    <subcellularLocation>
        <location>Plastid</location>
        <location>Chloroplast</location>
    </subcellularLocation>
</comment>
<comment type="similarity">
    <text evidence="1">Belongs to the bacterial ribosomal protein bL33 family.</text>
</comment>
<keyword id="KW-0150">Chloroplast</keyword>
<keyword id="KW-0934">Plastid</keyword>
<keyword id="KW-0687">Ribonucleoprotein</keyword>
<keyword id="KW-0689">Ribosomal protein</keyword>
<name>RK33_PIPCE</name>
<accession>Q06GN9</accession>
<gene>
    <name evidence="1" type="primary">rpl33</name>
</gene>